<keyword id="KW-0479">Metal-binding</keyword>
<keyword id="KW-0496">Mitochondrion</keyword>
<keyword id="KW-0520">NAD</keyword>
<keyword id="KW-1185">Reference proteome</keyword>
<keyword id="KW-0808">Transferase</keyword>
<keyword id="KW-0862">Zinc</keyword>
<name>SIR5_LEIMA</name>
<proteinExistence type="inferred from homology"/>
<protein>
    <recommendedName>
        <fullName evidence="1">NAD-dependent protein deacylase SIR2rp3</fullName>
        <ecNumber evidence="1">2.3.1.-</ecNumber>
    </recommendedName>
    <alternativeName>
        <fullName evidence="1">Regulatory protein SIR2 homolog 5</fullName>
    </alternativeName>
    <alternativeName>
        <fullName>SIR2-related protein 3</fullName>
    </alternativeName>
</protein>
<organism>
    <name type="scientific">Leishmania major</name>
    <dbReference type="NCBI Taxonomy" id="5664"/>
    <lineage>
        <taxon>Eukaryota</taxon>
        <taxon>Discoba</taxon>
        <taxon>Euglenozoa</taxon>
        <taxon>Kinetoplastea</taxon>
        <taxon>Metakinetoplastina</taxon>
        <taxon>Trypanosomatida</taxon>
        <taxon>Trypanosomatidae</taxon>
        <taxon>Leishmaniinae</taxon>
        <taxon>Leishmania</taxon>
    </lineage>
</organism>
<dbReference type="EC" id="2.3.1.-" evidence="1"/>
<dbReference type="EMBL" id="FR796430">
    <property type="protein sequence ID" value="CAJ07927.1"/>
    <property type="molecule type" value="Genomic_DNA"/>
</dbReference>
<dbReference type="RefSeq" id="XP_001686312.1">
    <property type="nucleotide sequence ID" value="XM_001686260.1"/>
</dbReference>
<dbReference type="SMR" id="Q4Q2Y6"/>
<dbReference type="FunCoup" id="Q4Q2Y6">
    <property type="interactions" value="26"/>
</dbReference>
<dbReference type="STRING" id="5664.Q4Q2Y6"/>
<dbReference type="EnsemblProtists" id="CAJ07927">
    <property type="protein sequence ID" value="CAJ07927"/>
    <property type="gene ID" value="LMJF_34_2140"/>
</dbReference>
<dbReference type="GeneID" id="5654981"/>
<dbReference type="KEGG" id="lma:LMJF_34_2140"/>
<dbReference type="VEuPathDB" id="TriTrypDB:LmjF.34.2140"/>
<dbReference type="VEuPathDB" id="TriTrypDB:LMJFC_340029600"/>
<dbReference type="VEuPathDB" id="TriTrypDB:LMJLV39_340026200"/>
<dbReference type="VEuPathDB" id="TriTrypDB:LMJSD75_340026900"/>
<dbReference type="eggNOG" id="KOG2684">
    <property type="taxonomic scope" value="Eukaryota"/>
</dbReference>
<dbReference type="HOGENOM" id="CLU_023643_3_1_1"/>
<dbReference type="InParanoid" id="Q4Q2Y6"/>
<dbReference type="OMA" id="KWIAAGP"/>
<dbReference type="Proteomes" id="UP000000542">
    <property type="component" value="Chromosome 34"/>
</dbReference>
<dbReference type="GO" id="GO:0005739">
    <property type="term" value="C:mitochondrion"/>
    <property type="evidence" value="ECO:0000266"/>
    <property type="project" value="GeneDB"/>
</dbReference>
<dbReference type="GO" id="GO:0005634">
    <property type="term" value="C:nucleus"/>
    <property type="evidence" value="ECO:0000318"/>
    <property type="project" value="GO_Central"/>
</dbReference>
<dbReference type="GO" id="GO:0017136">
    <property type="term" value="F:histone deacetylase activity, NAD-dependent"/>
    <property type="evidence" value="ECO:0000318"/>
    <property type="project" value="GO_Central"/>
</dbReference>
<dbReference type="GO" id="GO:0070403">
    <property type="term" value="F:NAD+ binding"/>
    <property type="evidence" value="ECO:0000318"/>
    <property type="project" value="GO_Central"/>
</dbReference>
<dbReference type="GO" id="GO:0061697">
    <property type="term" value="F:protein-glutaryllysine deglutarylase activity"/>
    <property type="evidence" value="ECO:0007669"/>
    <property type="project" value="RHEA"/>
</dbReference>
<dbReference type="GO" id="GO:0036054">
    <property type="term" value="F:protein-malonyllysine demalonylase activity"/>
    <property type="evidence" value="ECO:0007669"/>
    <property type="project" value="UniProtKB-UniRule"/>
</dbReference>
<dbReference type="GO" id="GO:0036055">
    <property type="term" value="F:protein-succinyllysine desuccinylase activity"/>
    <property type="evidence" value="ECO:0007669"/>
    <property type="project" value="UniProtKB-UniRule"/>
</dbReference>
<dbReference type="GO" id="GO:0008270">
    <property type="term" value="F:zinc ion binding"/>
    <property type="evidence" value="ECO:0007669"/>
    <property type="project" value="UniProtKB-UniRule"/>
</dbReference>
<dbReference type="GO" id="GO:0010608">
    <property type="term" value="P:post-transcriptional regulation of gene expression"/>
    <property type="evidence" value="ECO:0000266"/>
    <property type="project" value="GeneDB"/>
</dbReference>
<dbReference type="CDD" id="cd01412">
    <property type="entry name" value="SIRT5_Af1_CobB"/>
    <property type="match status" value="1"/>
</dbReference>
<dbReference type="Gene3D" id="3.30.1600.10">
    <property type="entry name" value="SIR2/SIRT2 'Small Domain"/>
    <property type="match status" value="1"/>
</dbReference>
<dbReference type="Gene3D" id="3.40.50.1220">
    <property type="entry name" value="TPP-binding domain"/>
    <property type="match status" value="1"/>
</dbReference>
<dbReference type="HAMAP" id="MF_01121">
    <property type="entry name" value="Sirtuin_ClassIII"/>
    <property type="match status" value="1"/>
</dbReference>
<dbReference type="InterPro" id="IPR029035">
    <property type="entry name" value="DHS-like_NAD/FAD-binding_dom"/>
</dbReference>
<dbReference type="InterPro" id="IPR050134">
    <property type="entry name" value="NAD-dep_sirtuin_deacylases"/>
</dbReference>
<dbReference type="InterPro" id="IPR003000">
    <property type="entry name" value="Sirtuin"/>
</dbReference>
<dbReference type="InterPro" id="IPR026591">
    <property type="entry name" value="Sirtuin_cat_small_dom_sf"/>
</dbReference>
<dbReference type="InterPro" id="IPR027546">
    <property type="entry name" value="Sirtuin_class_III"/>
</dbReference>
<dbReference type="InterPro" id="IPR026590">
    <property type="entry name" value="Ssirtuin_cat_dom"/>
</dbReference>
<dbReference type="NCBIfam" id="NF001755">
    <property type="entry name" value="PRK00481.1-5"/>
    <property type="match status" value="1"/>
</dbReference>
<dbReference type="PANTHER" id="PTHR11085:SF4">
    <property type="entry name" value="NAD-DEPENDENT PROTEIN DEACYLASE"/>
    <property type="match status" value="1"/>
</dbReference>
<dbReference type="PANTHER" id="PTHR11085">
    <property type="entry name" value="NAD-DEPENDENT PROTEIN DEACYLASE SIRTUIN-5, MITOCHONDRIAL-RELATED"/>
    <property type="match status" value="1"/>
</dbReference>
<dbReference type="Pfam" id="PF02146">
    <property type="entry name" value="SIR2"/>
    <property type="match status" value="1"/>
</dbReference>
<dbReference type="SUPFAM" id="SSF52467">
    <property type="entry name" value="DHS-like NAD/FAD-binding domain"/>
    <property type="match status" value="1"/>
</dbReference>
<dbReference type="PROSITE" id="PS50305">
    <property type="entry name" value="SIRTUIN"/>
    <property type="match status" value="1"/>
</dbReference>
<reference key="1">
    <citation type="journal article" date="2005" name="Science">
        <title>The genome of the kinetoplastid parasite, Leishmania major.</title>
        <authorList>
            <person name="Ivens A.C."/>
            <person name="Peacock C.S."/>
            <person name="Worthey E.A."/>
            <person name="Murphy L."/>
            <person name="Aggarwal G."/>
            <person name="Berriman M."/>
            <person name="Sisk E."/>
            <person name="Rajandream M.A."/>
            <person name="Adlem E."/>
            <person name="Aert R."/>
            <person name="Anupama A."/>
            <person name="Apostolou Z."/>
            <person name="Attipoe P."/>
            <person name="Bason N."/>
            <person name="Bauser C."/>
            <person name="Beck A."/>
            <person name="Beverley S.M."/>
            <person name="Bianchettin G."/>
            <person name="Borzym K."/>
            <person name="Bothe G."/>
            <person name="Bruschi C.V."/>
            <person name="Collins M."/>
            <person name="Cadag E."/>
            <person name="Ciarloni L."/>
            <person name="Clayton C."/>
            <person name="Coulson R.M.R."/>
            <person name="Cronin A."/>
            <person name="Cruz A.K."/>
            <person name="Davies R.M."/>
            <person name="De Gaudenzi J."/>
            <person name="Dobson D.E."/>
            <person name="Duesterhoeft A."/>
            <person name="Fazelina G."/>
            <person name="Fosker N."/>
            <person name="Frasch A.C."/>
            <person name="Fraser A."/>
            <person name="Fuchs M."/>
            <person name="Gabel C."/>
            <person name="Goble A."/>
            <person name="Goffeau A."/>
            <person name="Harris D."/>
            <person name="Hertz-Fowler C."/>
            <person name="Hilbert H."/>
            <person name="Horn D."/>
            <person name="Huang Y."/>
            <person name="Klages S."/>
            <person name="Knights A."/>
            <person name="Kube M."/>
            <person name="Larke N."/>
            <person name="Litvin L."/>
            <person name="Lord A."/>
            <person name="Louie T."/>
            <person name="Marra M."/>
            <person name="Masuy D."/>
            <person name="Matthews K."/>
            <person name="Michaeli S."/>
            <person name="Mottram J.C."/>
            <person name="Mueller-Auer S."/>
            <person name="Munden H."/>
            <person name="Nelson S."/>
            <person name="Norbertczak H."/>
            <person name="Oliver K."/>
            <person name="O'neil S."/>
            <person name="Pentony M."/>
            <person name="Pohl T.M."/>
            <person name="Price C."/>
            <person name="Purnelle B."/>
            <person name="Quail M.A."/>
            <person name="Rabbinowitsch E."/>
            <person name="Reinhardt R."/>
            <person name="Rieger M."/>
            <person name="Rinta J."/>
            <person name="Robben J."/>
            <person name="Robertson L."/>
            <person name="Ruiz J.C."/>
            <person name="Rutter S."/>
            <person name="Saunders D."/>
            <person name="Schaefer M."/>
            <person name="Schein J."/>
            <person name="Schwartz D.C."/>
            <person name="Seeger K."/>
            <person name="Seyler A."/>
            <person name="Sharp S."/>
            <person name="Shin H."/>
            <person name="Sivam D."/>
            <person name="Squares R."/>
            <person name="Squares S."/>
            <person name="Tosato V."/>
            <person name="Vogt C."/>
            <person name="Volckaert G."/>
            <person name="Wambutt R."/>
            <person name="Warren T."/>
            <person name="Wedler H."/>
            <person name="Woodward J."/>
            <person name="Zhou S."/>
            <person name="Zimmermann W."/>
            <person name="Smith D.F."/>
            <person name="Blackwell J.M."/>
            <person name="Stuart K.D."/>
            <person name="Barrell B.G."/>
            <person name="Myler P.J."/>
        </authorList>
    </citation>
    <scope>NUCLEOTIDE SEQUENCE [LARGE SCALE GENOMIC DNA]</scope>
    <source>
        <strain>MHOM/IL/81/Friedlin</strain>
    </source>
</reference>
<sequence>MKACRCITILTGAGISAESGISTFRDSNGLWCNHHVEDVASPDAFIRNPALVQLFYNERRRNLLLSSVKPNKAHTALAKLEEELSGKGKVFIVTQNVDNLHERAGSKNVLHMHGELLKARCTATGNVFEWQKDIVGDVDRCPDCGFLGTLRPHIVWFGEMPLCMDEIESILSTTDLFVAIGTSGNVYPAAGFVKRAQFYGATTLELNLQEGSNSTLFQESIYGKASSIVPTWVDQVLKESLKK</sequence>
<evidence type="ECO:0000255" key="1">
    <source>
        <dbReference type="HAMAP-Rule" id="MF_03160"/>
    </source>
</evidence>
<evidence type="ECO:0000255" key="2">
    <source>
        <dbReference type="PROSITE-ProRule" id="PRU00236"/>
    </source>
</evidence>
<gene>
    <name type="primary">SIR2rp3</name>
    <name type="ORF">LMJF_34_2140</name>
</gene>
<comment type="function">
    <text evidence="1">NAD-dependent lysine demalonylase, desuccinylase and deglutarylase that specifically removes malonyl, succinyl and glutaryl groups on target proteins. Has weak NAD-dependent protein deacetylase activity; however this activity may not be physiologically relevant in vivo.</text>
</comment>
<comment type="catalytic activity">
    <reaction evidence="1">
        <text>N(6)-malonyl-L-lysyl-[protein] + NAD(+) + H2O = 2''-O-malonyl-ADP-D-ribose + nicotinamide + L-lysyl-[protein]</text>
        <dbReference type="Rhea" id="RHEA:47672"/>
        <dbReference type="Rhea" id="RHEA-COMP:9752"/>
        <dbReference type="Rhea" id="RHEA-COMP:11878"/>
        <dbReference type="ChEBI" id="CHEBI:15377"/>
        <dbReference type="ChEBI" id="CHEBI:17154"/>
        <dbReference type="ChEBI" id="CHEBI:29969"/>
        <dbReference type="ChEBI" id="CHEBI:57540"/>
        <dbReference type="ChEBI" id="CHEBI:87831"/>
        <dbReference type="ChEBI" id="CHEBI:87833"/>
    </reaction>
</comment>
<comment type="catalytic activity">
    <reaction evidence="1">
        <text>N(6)-succinyl-L-lysyl-[protein] + NAD(+) + H2O = 2''-O-succinyl-ADP-D-ribose + nicotinamide + L-lysyl-[protein]</text>
        <dbReference type="Rhea" id="RHEA:47668"/>
        <dbReference type="Rhea" id="RHEA-COMP:9752"/>
        <dbReference type="Rhea" id="RHEA-COMP:11877"/>
        <dbReference type="ChEBI" id="CHEBI:15377"/>
        <dbReference type="ChEBI" id="CHEBI:17154"/>
        <dbReference type="ChEBI" id="CHEBI:29969"/>
        <dbReference type="ChEBI" id="CHEBI:57540"/>
        <dbReference type="ChEBI" id="CHEBI:87830"/>
        <dbReference type="ChEBI" id="CHEBI:87832"/>
    </reaction>
</comment>
<comment type="catalytic activity">
    <reaction evidence="1">
        <text>N(6)-glutaryl-L-lysyl-[protein] + NAD(+) + H2O = 2''-O-glutaryl-ADP-D-ribose + nicotinamide + L-lysyl-[protein]</text>
        <dbReference type="Rhea" id="RHEA:47664"/>
        <dbReference type="Rhea" id="RHEA-COMP:9752"/>
        <dbReference type="Rhea" id="RHEA-COMP:11875"/>
        <dbReference type="ChEBI" id="CHEBI:15377"/>
        <dbReference type="ChEBI" id="CHEBI:17154"/>
        <dbReference type="ChEBI" id="CHEBI:29969"/>
        <dbReference type="ChEBI" id="CHEBI:57540"/>
        <dbReference type="ChEBI" id="CHEBI:87828"/>
        <dbReference type="ChEBI" id="CHEBI:87829"/>
    </reaction>
</comment>
<comment type="cofactor">
    <cofactor evidence="1">
        <name>Zn(2+)</name>
        <dbReference type="ChEBI" id="CHEBI:29105"/>
    </cofactor>
    <text evidence="1">Binds 1 zinc ion per subunit.</text>
</comment>
<comment type="subcellular location">
    <subcellularLocation>
        <location evidence="1">Mitochondrion</location>
    </subcellularLocation>
</comment>
<comment type="domain">
    <text evidence="1">In contrast to class I sirtuins, class III sirtuins have only weak deacetylase activity. Difference in substrate specificity is probably due to a larger hydrophobic pocket with 2 residues (Tyr-56 and Arg-59) that bind to malonylated and succinylated substrates and define the specificity.</text>
</comment>
<comment type="miscellaneous">
    <text evidence="1">This protein may be expected to contain an N-terminal transit peptide but none has been predicted.</text>
</comment>
<comment type="similarity">
    <text evidence="1">Belongs to the sirtuin family. Class III subfamily.</text>
</comment>
<feature type="chain" id="PRO_0000417425" description="NAD-dependent protein deacylase SIR2rp3">
    <location>
        <begin position="1"/>
        <end position="243"/>
    </location>
</feature>
<feature type="domain" description="Deacetylase sirtuin-type" evidence="2">
    <location>
        <begin position="1"/>
        <end position="239"/>
    </location>
</feature>
<feature type="active site" description="Proton acceptor" evidence="1">
    <location>
        <position position="113"/>
    </location>
</feature>
<feature type="binding site" evidence="1">
    <location>
        <begin position="12"/>
        <end position="31"/>
    </location>
    <ligand>
        <name>NAD(+)</name>
        <dbReference type="ChEBI" id="CHEBI:57540"/>
    </ligand>
</feature>
<feature type="binding site" evidence="1">
    <location>
        <position position="56"/>
    </location>
    <ligand>
        <name>substrate</name>
    </ligand>
</feature>
<feature type="binding site" evidence="1">
    <location>
        <position position="59"/>
    </location>
    <ligand>
        <name>substrate</name>
    </ligand>
</feature>
<feature type="binding site" evidence="1">
    <location>
        <begin position="95"/>
        <end position="98"/>
    </location>
    <ligand>
        <name>NAD(+)</name>
        <dbReference type="ChEBI" id="CHEBI:57540"/>
    </ligand>
</feature>
<feature type="binding site" evidence="1">
    <location>
        <position position="121"/>
    </location>
    <ligand>
        <name>Zn(2+)</name>
        <dbReference type="ChEBI" id="CHEBI:29105"/>
    </ligand>
</feature>
<feature type="binding site" evidence="1">
    <location>
        <position position="141"/>
    </location>
    <ligand>
        <name>Zn(2+)</name>
        <dbReference type="ChEBI" id="CHEBI:29105"/>
    </ligand>
</feature>
<feature type="binding site" evidence="1">
    <location>
        <begin position="181"/>
        <end position="183"/>
    </location>
    <ligand>
        <name>NAD(+)</name>
        <dbReference type="ChEBI" id="CHEBI:57540"/>
    </ligand>
</feature>
<feature type="binding site" evidence="1">
    <location>
        <position position="225"/>
    </location>
    <ligand>
        <name>NAD(+)</name>
        <dbReference type="ChEBI" id="CHEBI:57540"/>
    </ligand>
</feature>
<accession>Q4Q2Y6</accession>